<gene>
    <name type="primary">ctaG</name>
</gene>
<sequence>MSGGKPRSNTRTVAMLAGVVVLMGALSWAAVPFYSWFCKVTGFAGTTNVAEAASDTVLDEKIRVRFDANADSNLGWTFRPMQREMELKIGENAIAFYEAINNTDEPVTGTASYNVAPDAAGYFFNKIECFCFTEQTLQPGERVEMPVSFFVDADLVNDRDAVIRDITLSYTFHRTDPPAPKQAALDAKTEPTVN</sequence>
<dbReference type="EMBL" id="X05828">
    <property type="protein sequence ID" value="CAA29271.1"/>
    <property type="molecule type" value="Genomic_DNA"/>
</dbReference>
<dbReference type="PIR" id="S03806">
    <property type="entry name" value="S03806"/>
</dbReference>
<dbReference type="SMR" id="P08303"/>
<dbReference type="BRENDA" id="1.11.1.6">
    <property type="organism ID" value="3341"/>
</dbReference>
<dbReference type="GO" id="GO:0005886">
    <property type="term" value="C:plasma membrane"/>
    <property type="evidence" value="ECO:0007669"/>
    <property type="project" value="UniProtKB-SubCell"/>
</dbReference>
<dbReference type="GO" id="GO:0005507">
    <property type="term" value="F:copper ion binding"/>
    <property type="evidence" value="ECO:0007669"/>
    <property type="project" value="InterPro"/>
</dbReference>
<dbReference type="GO" id="GO:0008535">
    <property type="term" value="P:respiratory chain complex IV assembly"/>
    <property type="evidence" value="ECO:0007669"/>
    <property type="project" value="UniProtKB-UniRule"/>
</dbReference>
<dbReference type="FunFam" id="2.60.370.10:FF:000001">
    <property type="entry name" value="COX11 cytochrome c oxidase assembly homolog"/>
    <property type="match status" value="1"/>
</dbReference>
<dbReference type="Gene3D" id="2.60.370.10">
    <property type="entry name" value="Ctag/Cox11"/>
    <property type="match status" value="1"/>
</dbReference>
<dbReference type="HAMAP" id="MF_00155">
    <property type="entry name" value="CtaG"/>
    <property type="match status" value="1"/>
</dbReference>
<dbReference type="InterPro" id="IPR023471">
    <property type="entry name" value="CtaG/Cox11_dom_sf"/>
</dbReference>
<dbReference type="InterPro" id="IPR007533">
    <property type="entry name" value="Cyt_c_oxidase_assmbl_CtaG"/>
</dbReference>
<dbReference type="NCBIfam" id="NF003465">
    <property type="entry name" value="PRK05089.1"/>
    <property type="match status" value="1"/>
</dbReference>
<dbReference type="PANTHER" id="PTHR21320:SF3">
    <property type="entry name" value="CYTOCHROME C OXIDASE ASSEMBLY PROTEIN COX11, MITOCHONDRIAL-RELATED"/>
    <property type="match status" value="1"/>
</dbReference>
<dbReference type="PANTHER" id="PTHR21320">
    <property type="entry name" value="CYTOCHROME C OXIDASE ASSEMBLY PROTEIN COX11-RELATED"/>
    <property type="match status" value="1"/>
</dbReference>
<dbReference type="Pfam" id="PF04442">
    <property type="entry name" value="CtaG_Cox11"/>
    <property type="match status" value="1"/>
</dbReference>
<dbReference type="PIRSF" id="PIRSF005413">
    <property type="entry name" value="COX11"/>
    <property type="match status" value="1"/>
</dbReference>
<dbReference type="SUPFAM" id="SSF110111">
    <property type="entry name" value="Ctag/Cox11"/>
    <property type="match status" value="1"/>
</dbReference>
<accession>P08303</accession>
<feature type="chain" id="PRO_0000206036" description="Cytochrome c oxidase assembly protein CtaG">
    <location>
        <begin position="1"/>
        <end position="194"/>
    </location>
</feature>
<feature type="topological domain" description="Cytoplasmic" evidence="2">
    <location>
        <begin position="1"/>
        <end position="12"/>
    </location>
</feature>
<feature type="transmembrane region" description="Helical; Signal-anchor for type II membrane protein" evidence="2">
    <location>
        <begin position="13"/>
        <end position="33"/>
    </location>
</feature>
<feature type="topological domain" description="Periplasmic" evidence="2">
    <location>
        <begin position="34"/>
        <end position="194"/>
    </location>
</feature>
<keyword id="KW-0997">Cell inner membrane</keyword>
<keyword id="KW-1003">Cell membrane</keyword>
<keyword id="KW-0186">Copper</keyword>
<keyword id="KW-0472">Membrane</keyword>
<keyword id="KW-0735">Signal-anchor</keyword>
<keyword id="KW-0812">Transmembrane</keyword>
<keyword id="KW-1133">Transmembrane helix</keyword>
<reference key="1">
    <citation type="journal article" date="1987" name="EMBO J.">
        <title>Isolation and analysis of the genes for cytochrome c oxidase in Paracoccus denitrificans.</title>
        <authorList>
            <person name="Raitio M."/>
            <person name="Jalli T."/>
            <person name="Saraste M."/>
        </authorList>
    </citation>
    <scope>NUCLEOTIDE SEQUENCE [GENOMIC DNA]</scope>
</reference>
<organism>
    <name type="scientific">Paracoccus denitrificans</name>
    <dbReference type="NCBI Taxonomy" id="266"/>
    <lineage>
        <taxon>Bacteria</taxon>
        <taxon>Pseudomonadati</taxon>
        <taxon>Pseudomonadota</taxon>
        <taxon>Alphaproteobacteria</taxon>
        <taxon>Rhodobacterales</taxon>
        <taxon>Paracoccaceae</taxon>
        <taxon>Paracoccus</taxon>
    </lineage>
</organism>
<name>COXZ_PARDE</name>
<protein>
    <recommendedName>
        <fullName>Cytochrome c oxidase assembly protein CtaG</fullName>
    </recommendedName>
</protein>
<comment type="function">
    <text evidence="1">Exerts its effect at some terminal stage of cytochrome c oxidase synthesis, probably by being involved in the insertion of the copper B into subunit I.</text>
</comment>
<comment type="subcellular location">
    <subcellularLocation>
        <location evidence="3">Cell inner membrane</location>
        <topology evidence="3">Single-pass type II membrane protein</topology>
        <orientation evidence="3">Periplasmic side</orientation>
    </subcellularLocation>
</comment>
<comment type="similarity">
    <text evidence="3">Belongs to the COX11/CtaG family.</text>
</comment>
<evidence type="ECO:0000250" key="1"/>
<evidence type="ECO:0000255" key="2"/>
<evidence type="ECO:0000305" key="3"/>
<proteinExistence type="inferred from homology"/>